<sequence length="316" mass="33579">MPLDGVKNIVLVLSGKGGVGKSSVTLQLALALSLQGKSVGILDIDLTGPSIPRIVGLEDAKITQTPRGWLPVSVHPPENTAQDGAPPRGALRCMSLGFLLRDRGDAVIWRGPKKTAMIRQFLSDVSWGPTDYLLVDTPPGTSDEHIALAEQLLTLASTDPAVASSMGRPRLAGAVLVTTPQAVATSDVRKEANFCVKTQIPALGVIENMSGYTCPCCGEVSNLFSSGGGKVMAEELGIRFLGTVPVDVKFGELVEGKMVVDSDSDEEDGPTQAQQPEEPVDNRPLVERYKDCWSYSRFEEFAKTLISQIESGSAAS</sequence>
<keyword id="KW-0004">4Fe-4S</keyword>
<keyword id="KW-0067">ATP-binding</keyword>
<keyword id="KW-0963">Cytoplasm</keyword>
<keyword id="KW-0408">Iron</keyword>
<keyword id="KW-0411">Iron-sulfur</keyword>
<keyword id="KW-0479">Metal-binding</keyword>
<keyword id="KW-0547">Nucleotide-binding</keyword>
<keyword id="KW-1185">Reference proteome</keyword>
<gene>
    <name type="primary">cfd1</name>
    <name type="ORF">AFUA_5G03600</name>
</gene>
<organism>
    <name type="scientific">Aspergillus fumigatus (strain ATCC MYA-4609 / CBS 101355 / FGSC A1100 / Af293)</name>
    <name type="common">Neosartorya fumigata</name>
    <dbReference type="NCBI Taxonomy" id="330879"/>
    <lineage>
        <taxon>Eukaryota</taxon>
        <taxon>Fungi</taxon>
        <taxon>Dikarya</taxon>
        <taxon>Ascomycota</taxon>
        <taxon>Pezizomycotina</taxon>
        <taxon>Eurotiomycetes</taxon>
        <taxon>Eurotiomycetidae</taxon>
        <taxon>Eurotiales</taxon>
        <taxon>Aspergillaceae</taxon>
        <taxon>Aspergillus</taxon>
        <taxon>Aspergillus subgen. Fumigati</taxon>
    </lineage>
</organism>
<protein>
    <recommendedName>
        <fullName evidence="1">Cytosolic Fe-S cluster assembly factor cfd1</fullName>
    </recommendedName>
    <alternativeName>
        <fullName evidence="1">Cytosolic Fe-S cluster-deficient protein 1</fullName>
    </alternativeName>
</protein>
<accession>Q4WEN1</accession>
<comment type="function">
    <text evidence="1">Component of the cytosolic iron-sulfur (Fe/S) protein assembly (CIA) machinery. Required for maturation of extramitochondrial Fe-S proteins. The nbp35-cfd1 heterotetramer forms a Fe-S scaffold complex, mediating the de novo assembly of an Fe-S cluster and its transfer to target apoproteins.</text>
</comment>
<comment type="cofactor">
    <cofactor evidence="1">
        <name>[4Fe-4S] cluster</name>
        <dbReference type="ChEBI" id="CHEBI:49883"/>
    </cofactor>
    <text evidence="1">Binds 4 [4Fe-4S] clusters per heterotetramer. Contains two stable clusters in the N-termini of nbp35 and two labile, bridging clusters between subunits of the nbp35-cfd1 heterotetramer.</text>
</comment>
<comment type="subunit">
    <text evidence="1">Heterotetramer of 2 nbp35 and 2 cfd1 chains.</text>
</comment>
<comment type="subcellular location">
    <subcellularLocation>
        <location evidence="1">Cytoplasm</location>
    </subcellularLocation>
</comment>
<comment type="similarity">
    <text evidence="1">Belongs to the Mrp/NBP35 ATP-binding proteins family. NUBP2/CFD1 subfamily.</text>
</comment>
<evidence type="ECO:0000255" key="1">
    <source>
        <dbReference type="HAMAP-Rule" id="MF_03039"/>
    </source>
</evidence>
<evidence type="ECO:0000256" key="2">
    <source>
        <dbReference type="SAM" id="MobiDB-lite"/>
    </source>
</evidence>
<name>CFD1_ASPFU</name>
<feature type="chain" id="PRO_0000278870" description="Cytosolic Fe-S cluster assembly factor cfd1">
    <location>
        <begin position="1"/>
        <end position="316"/>
    </location>
</feature>
<feature type="region of interest" description="Disordered" evidence="2">
    <location>
        <begin position="260"/>
        <end position="285"/>
    </location>
</feature>
<feature type="binding site" evidence="1">
    <location>
        <begin position="15"/>
        <end position="22"/>
    </location>
    <ligand>
        <name>ATP</name>
        <dbReference type="ChEBI" id="CHEBI:30616"/>
    </ligand>
</feature>
<feature type="binding site" evidence="1">
    <location>
        <position position="214"/>
    </location>
    <ligand>
        <name>[4Fe-4S] cluster</name>
        <dbReference type="ChEBI" id="CHEBI:49883"/>
        <note>ligand shared between dimeric partners</note>
    </ligand>
</feature>
<feature type="binding site" evidence="1">
    <location>
        <position position="217"/>
    </location>
    <ligand>
        <name>[4Fe-4S] cluster</name>
        <dbReference type="ChEBI" id="CHEBI:49883"/>
        <note>ligand shared between dimeric partners</note>
    </ligand>
</feature>
<dbReference type="EMBL" id="AAHF01000011">
    <property type="protein sequence ID" value="EAL85946.1"/>
    <property type="molecule type" value="Genomic_DNA"/>
</dbReference>
<dbReference type="RefSeq" id="XP_747984.1">
    <property type="nucleotide sequence ID" value="XM_742891.1"/>
</dbReference>
<dbReference type="SMR" id="Q4WEN1"/>
<dbReference type="FunCoup" id="Q4WEN1">
    <property type="interactions" value="149"/>
</dbReference>
<dbReference type="STRING" id="330879.Q4WEN1"/>
<dbReference type="EnsemblFungi" id="EAL85946">
    <property type="protein sequence ID" value="EAL85946"/>
    <property type="gene ID" value="AFUA_5G03600"/>
</dbReference>
<dbReference type="GeneID" id="3505599"/>
<dbReference type="KEGG" id="afm:AFUA_5G03600"/>
<dbReference type="VEuPathDB" id="FungiDB:Afu5g03600"/>
<dbReference type="eggNOG" id="KOG3022">
    <property type="taxonomic scope" value="Eukaryota"/>
</dbReference>
<dbReference type="HOGENOM" id="CLU_024839_0_1_1"/>
<dbReference type="InParanoid" id="Q4WEN1"/>
<dbReference type="OMA" id="WIPVFAD"/>
<dbReference type="OrthoDB" id="3900342at2759"/>
<dbReference type="Proteomes" id="UP000002530">
    <property type="component" value="Chromosome 5"/>
</dbReference>
<dbReference type="GO" id="GO:0005829">
    <property type="term" value="C:cytosol"/>
    <property type="evidence" value="ECO:0000318"/>
    <property type="project" value="GO_Central"/>
</dbReference>
<dbReference type="GO" id="GO:1904564">
    <property type="term" value="C:cytosolic [4Fe-4S] assembly scaffold complex"/>
    <property type="evidence" value="ECO:0007669"/>
    <property type="project" value="EnsemblFungi"/>
</dbReference>
<dbReference type="GO" id="GO:0051539">
    <property type="term" value="F:4 iron, 4 sulfur cluster binding"/>
    <property type="evidence" value="ECO:0007669"/>
    <property type="project" value="UniProtKB-UniRule"/>
</dbReference>
<dbReference type="GO" id="GO:0005524">
    <property type="term" value="F:ATP binding"/>
    <property type="evidence" value="ECO:0007669"/>
    <property type="project" value="UniProtKB-KW"/>
</dbReference>
<dbReference type="GO" id="GO:0016887">
    <property type="term" value="F:ATP hydrolysis activity"/>
    <property type="evidence" value="ECO:0007669"/>
    <property type="project" value="EnsemblFungi"/>
</dbReference>
<dbReference type="GO" id="GO:0140663">
    <property type="term" value="F:ATP-dependent FeS chaperone activity"/>
    <property type="evidence" value="ECO:0007669"/>
    <property type="project" value="InterPro"/>
</dbReference>
<dbReference type="GO" id="GO:0051536">
    <property type="term" value="F:iron-sulfur cluster binding"/>
    <property type="evidence" value="ECO:0000318"/>
    <property type="project" value="GO_Central"/>
</dbReference>
<dbReference type="GO" id="GO:0046872">
    <property type="term" value="F:metal ion binding"/>
    <property type="evidence" value="ECO:0007669"/>
    <property type="project" value="UniProtKB-KW"/>
</dbReference>
<dbReference type="GO" id="GO:0016226">
    <property type="term" value="P:iron-sulfur cluster assembly"/>
    <property type="evidence" value="ECO:0000318"/>
    <property type="project" value="GO_Central"/>
</dbReference>
<dbReference type="GO" id="GO:0002098">
    <property type="term" value="P:tRNA wobble uridine modification"/>
    <property type="evidence" value="ECO:0007669"/>
    <property type="project" value="EnsemblFungi"/>
</dbReference>
<dbReference type="CDD" id="cd02037">
    <property type="entry name" value="Mrp_NBP35"/>
    <property type="match status" value="1"/>
</dbReference>
<dbReference type="FunFam" id="3.40.50.300:FF:001300">
    <property type="entry name" value="Cytosolic Fe-S cluster assembly factor CFD1"/>
    <property type="match status" value="1"/>
</dbReference>
<dbReference type="Gene3D" id="3.40.50.300">
    <property type="entry name" value="P-loop containing nucleotide triphosphate hydrolases"/>
    <property type="match status" value="1"/>
</dbReference>
<dbReference type="HAMAP" id="MF_02040">
    <property type="entry name" value="Mrp_NBP35"/>
    <property type="match status" value="1"/>
</dbReference>
<dbReference type="HAMAP" id="MF_03039">
    <property type="entry name" value="NUBP2"/>
    <property type="match status" value="1"/>
</dbReference>
<dbReference type="InterPro" id="IPR019591">
    <property type="entry name" value="Mrp/NBP35_ATP-bd"/>
</dbReference>
<dbReference type="InterPro" id="IPR028600">
    <property type="entry name" value="NUBP2/Cfd1_eukaryotes"/>
</dbReference>
<dbReference type="InterPro" id="IPR027417">
    <property type="entry name" value="P-loop_NTPase"/>
</dbReference>
<dbReference type="InterPro" id="IPR033756">
    <property type="entry name" value="YlxH/NBP35"/>
</dbReference>
<dbReference type="PANTHER" id="PTHR23264:SF19">
    <property type="entry name" value="CYTOSOLIC FE-S CLUSTER ASSEMBLY FACTOR NUBP2"/>
    <property type="match status" value="1"/>
</dbReference>
<dbReference type="PANTHER" id="PTHR23264">
    <property type="entry name" value="NUCLEOTIDE-BINDING PROTEIN NBP35 YEAST -RELATED"/>
    <property type="match status" value="1"/>
</dbReference>
<dbReference type="Pfam" id="PF10609">
    <property type="entry name" value="ParA"/>
    <property type="match status" value="1"/>
</dbReference>
<dbReference type="SUPFAM" id="SSF52540">
    <property type="entry name" value="P-loop containing nucleoside triphosphate hydrolases"/>
    <property type="match status" value="1"/>
</dbReference>
<reference key="1">
    <citation type="journal article" date="2005" name="Nature">
        <title>Genomic sequence of the pathogenic and allergenic filamentous fungus Aspergillus fumigatus.</title>
        <authorList>
            <person name="Nierman W.C."/>
            <person name="Pain A."/>
            <person name="Anderson M.J."/>
            <person name="Wortman J.R."/>
            <person name="Kim H.S."/>
            <person name="Arroyo J."/>
            <person name="Berriman M."/>
            <person name="Abe K."/>
            <person name="Archer D.B."/>
            <person name="Bermejo C."/>
            <person name="Bennett J.W."/>
            <person name="Bowyer P."/>
            <person name="Chen D."/>
            <person name="Collins M."/>
            <person name="Coulsen R."/>
            <person name="Davies R."/>
            <person name="Dyer P.S."/>
            <person name="Farman M.L."/>
            <person name="Fedorova N."/>
            <person name="Fedorova N.D."/>
            <person name="Feldblyum T.V."/>
            <person name="Fischer R."/>
            <person name="Fosker N."/>
            <person name="Fraser A."/>
            <person name="Garcia J.L."/>
            <person name="Garcia M.J."/>
            <person name="Goble A."/>
            <person name="Goldman G.H."/>
            <person name="Gomi K."/>
            <person name="Griffith-Jones S."/>
            <person name="Gwilliam R."/>
            <person name="Haas B.J."/>
            <person name="Haas H."/>
            <person name="Harris D.E."/>
            <person name="Horiuchi H."/>
            <person name="Huang J."/>
            <person name="Humphray S."/>
            <person name="Jimenez J."/>
            <person name="Keller N."/>
            <person name="Khouri H."/>
            <person name="Kitamoto K."/>
            <person name="Kobayashi T."/>
            <person name="Konzack S."/>
            <person name="Kulkarni R."/>
            <person name="Kumagai T."/>
            <person name="Lafton A."/>
            <person name="Latge J.-P."/>
            <person name="Li W."/>
            <person name="Lord A."/>
            <person name="Lu C."/>
            <person name="Majoros W.H."/>
            <person name="May G.S."/>
            <person name="Miller B.L."/>
            <person name="Mohamoud Y."/>
            <person name="Molina M."/>
            <person name="Monod M."/>
            <person name="Mouyna I."/>
            <person name="Mulligan S."/>
            <person name="Murphy L.D."/>
            <person name="O'Neil S."/>
            <person name="Paulsen I."/>
            <person name="Penalva M.A."/>
            <person name="Pertea M."/>
            <person name="Price C."/>
            <person name="Pritchard B.L."/>
            <person name="Quail M.A."/>
            <person name="Rabbinowitsch E."/>
            <person name="Rawlins N."/>
            <person name="Rajandream M.A."/>
            <person name="Reichard U."/>
            <person name="Renauld H."/>
            <person name="Robson G.D."/>
            <person name="Rodriguez de Cordoba S."/>
            <person name="Rodriguez-Pena J.M."/>
            <person name="Ronning C.M."/>
            <person name="Rutter S."/>
            <person name="Salzberg S.L."/>
            <person name="Sanchez M."/>
            <person name="Sanchez-Ferrero J.C."/>
            <person name="Saunders D."/>
            <person name="Seeger K."/>
            <person name="Squares R."/>
            <person name="Squares S."/>
            <person name="Takeuchi M."/>
            <person name="Tekaia F."/>
            <person name="Turner G."/>
            <person name="Vazquez de Aldana C.R."/>
            <person name="Weidman J."/>
            <person name="White O."/>
            <person name="Woodward J.R."/>
            <person name="Yu J.-H."/>
            <person name="Fraser C.M."/>
            <person name="Galagan J.E."/>
            <person name="Asai K."/>
            <person name="Machida M."/>
            <person name="Hall N."/>
            <person name="Barrell B.G."/>
            <person name="Denning D.W."/>
        </authorList>
    </citation>
    <scope>NUCLEOTIDE SEQUENCE [LARGE SCALE GENOMIC DNA]</scope>
    <source>
        <strain>ATCC MYA-4609 / CBS 101355 / FGSC A1100 / Af293</strain>
    </source>
</reference>
<proteinExistence type="inferred from homology"/>